<reference key="1">
    <citation type="journal article" date="2010" name="J. Bacteriol.">
        <title>The genetic basis of laboratory adaptation in Caulobacter crescentus.</title>
        <authorList>
            <person name="Marks M.E."/>
            <person name="Castro-Rojas C.M."/>
            <person name="Teiling C."/>
            <person name="Du L."/>
            <person name="Kapatral V."/>
            <person name="Walunas T.L."/>
            <person name="Crosson S."/>
        </authorList>
    </citation>
    <scope>NUCLEOTIDE SEQUENCE [LARGE SCALE GENOMIC DNA]</scope>
    <source>
        <strain>NA1000 / CB15N</strain>
    </source>
</reference>
<protein>
    <recommendedName>
        <fullName evidence="1">Small ribosomal subunit protein uS5</fullName>
    </recommendedName>
    <alternativeName>
        <fullName evidence="3">30S ribosomal protein S5</fullName>
    </alternativeName>
</protein>
<evidence type="ECO:0000255" key="1">
    <source>
        <dbReference type="HAMAP-Rule" id="MF_01307"/>
    </source>
</evidence>
<evidence type="ECO:0000256" key="2">
    <source>
        <dbReference type="SAM" id="MobiDB-lite"/>
    </source>
</evidence>
<evidence type="ECO:0000305" key="3"/>
<comment type="function">
    <text evidence="1">With S4 and S12 plays an important role in translational accuracy.</text>
</comment>
<comment type="function">
    <text evidence="1">Located at the back of the 30S subunit body where it stabilizes the conformation of the head with respect to the body.</text>
</comment>
<comment type="subunit">
    <text evidence="1">Part of the 30S ribosomal subunit. Contacts proteins S4 and S8.</text>
</comment>
<comment type="domain">
    <text>The N-terminal domain interacts with the head of the 30S subunit; the C-terminal domain interacts with the body and contacts protein S4. The interaction surface between S4 and S5 is involved in control of translational fidelity.</text>
</comment>
<comment type="similarity">
    <text evidence="1">Belongs to the universal ribosomal protein uS5 family.</text>
</comment>
<gene>
    <name evidence="1" type="primary">rpsE</name>
    <name type="ordered locus">CCNA_01323</name>
</gene>
<sequence length="201" mass="21612">MARGEQQRGEGGQRRDRRDRNAPEERVDSDIVEKLVHINRVAATVKGGRRFSFAALMVVGDQKGRVGFGHGKAREVPEAIRKATEEAKKTMIRVPLRESRTLHHDGAGRWGAGKVMMRAAPPGTGVIAGGPMRAVLETLGVQDVVAKSTGSSNPYNMVRATFEALKVQSSPRQIAAKRGKKVGDILGRRADGASAPEAIEG</sequence>
<feature type="chain" id="PRO_1000165445" description="Small ribosomal subunit protein uS5">
    <location>
        <begin position="1"/>
        <end position="201"/>
    </location>
</feature>
<feature type="domain" description="S5 DRBM" evidence="1">
    <location>
        <begin position="31"/>
        <end position="94"/>
    </location>
</feature>
<feature type="region of interest" description="Disordered" evidence="2">
    <location>
        <begin position="1"/>
        <end position="28"/>
    </location>
</feature>
<feature type="region of interest" description="Disordered" evidence="2">
    <location>
        <begin position="173"/>
        <end position="201"/>
    </location>
</feature>
<feature type="compositionally biased region" description="Basic and acidic residues" evidence="2">
    <location>
        <begin position="181"/>
        <end position="191"/>
    </location>
</feature>
<keyword id="KW-1185">Reference proteome</keyword>
<keyword id="KW-0687">Ribonucleoprotein</keyword>
<keyword id="KW-0689">Ribosomal protein</keyword>
<keyword id="KW-0694">RNA-binding</keyword>
<keyword id="KW-0699">rRNA-binding</keyword>
<organism>
    <name type="scientific">Caulobacter vibrioides (strain NA1000 / CB15N)</name>
    <name type="common">Caulobacter crescentus</name>
    <dbReference type="NCBI Taxonomy" id="565050"/>
    <lineage>
        <taxon>Bacteria</taxon>
        <taxon>Pseudomonadati</taxon>
        <taxon>Pseudomonadota</taxon>
        <taxon>Alphaproteobacteria</taxon>
        <taxon>Caulobacterales</taxon>
        <taxon>Caulobacteraceae</taxon>
        <taxon>Caulobacter</taxon>
    </lineage>
</organism>
<proteinExistence type="inferred from homology"/>
<name>RS5_CAUVN</name>
<accession>B8H4F1</accession>
<dbReference type="EMBL" id="CP001340">
    <property type="protein sequence ID" value="ACL94788.1"/>
    <property type="molecule type" value="Genomic_DNA"/>
</dbReference>
<dbReference type="RefSeq" id="WP_010919144.1">
    <property type="nucleotide sequence ID" value="NC_011916.1"/>
</dbReference>
<dbReference type="RefSeq" id="YP_002516696.1">
    <property type="nucleotide sequence ID" value="NC_011916.1"/>
</dbReference>
<dbReference type="SMR" id="B8H4F1"/>
<dbReference type="GeneID" id="7333055"/>
<dbReference type="KEGG" id="ccs:CCNA_01323"/>
<dbReference type="PATRIC" id="fig|565050.3.peg.1307"/>
<dbReference type="HOGENOM" id="CLU_065898_2_2_5"/>
<dbReference type="OrthoDB" id="9809045at2"/>
<dbReference type="PhylomeDB" id="B8H4F1"/>
<dbReference type="Proteomes" id="UP000001364">
    <property type="component" value="Chromosome"/>
</dbReference>
<dbReference type="GO" id="GO:0015935">
    <property type="term" value="C:small ribosomal subunit"/>
    <property type="evidence" value="ECO:0007669"/>
    <property type="project" value="InterPro"/>
</dbReference>
<dbReference type="GO" id="GO:0019843">
    <property type="term" value="F:rRNA binding"/>
    <property type="evidence" value="ECO:0007669"/>
    <property type="project" value="UniProtKB-UniRule"/>
</dbReference>
<dbReference type="GO" id="GO:0003735">
    <property type="term" value="F:structural constituent of ribosome"/>
    <property type="evidence" value="ECO:0007669"/>
    <property type="project" value="InterPro"/>
</dbReference>
<dbReference type="GO" id="GO:0006412">
    <property type="term" value="P:translation"/>
    <property type="evidence" value="ECO:0007669"/>
    <property type="project" value="UniProtKB-UniRule"/>
</dbReference>
<dbReference type="FunFam" id="3.30.160.20:FF:000001">
    <property type="entry name" value="30S ribosomal protein S5"/>
    <property type="match status" value="1"/>
</dbReference>
<dbReference type="FunFam" id="3.30.230.10:FF:000002">
    <property type="entry name" value="30S ribosomal protein S5"/>
    <property type="match status" value="1"/>
</dbReference>
<dbReference type="Gene3D" id="3.30.160.20">
    <property type="match status" value="1"/>
</dbReference>
<dbReference type="Gene3D" id="3.30.230.10">
    <property type="match status" value="1"/>
</dbReference>
<dbReference type="HAMAP" id="MF_01307_B">
    <property type="entry name" value="Ribosomal_uS5_B"/>
    <property type="match status" value="1"/>
</dbReference>
<dbReference type="InterPro" id="IPR020568">
    <property type="entry name" value="Ribosomal_Su5_D2-typ_SF"/>
</dbReference>
<dbReference type="InterPro" id="IPR000851">
    <property type="entry name" value="Ribosomal_uS5"/>
</dbReference>
<dbReference type="InterPro" id="IPR005712">
    <property type="entry name" value="Ribosomal_uS5_bac-type"/>
</dbReference>
<dbReference type="InterPro" id="IPR005324">
    <property type="entry name" value="Ribosomal_uS5_C"/>
</dbReference>
<dbReference type="InterPro" id="IPR013810">
    <property type="entry name" value="Ribosomal_uS5_N"/>
</dbReference>
<dbReference type="InterPro" id="IPR018192">
    <property type="entry name" value="Ribosomal_uS5_N_CS"/>
</dbReference>
<dbReference type="InterPro" id="IPR014721">
    <property type="entry name" value="Ribsml_uS5_D2-typ_fold_subgr"/>
</dbReference>
<dbReference type="NCBIfam" id="TIGR01021">
    <property type="entry name" value="rpsE_bact"/>
    <property type="match status" value="1"/>
</dbReference>
<dbReference type="PANTHER" id="PTHR48277">
    <property type="entry name" value="MITOCHONDRIAL RIBOSOMAL PROTEIN S5"/>
    <property type="match status" value="1"/>
</dbReference>
<dbReference type="PANTHER" id="PTHR48277:SF1">
    <property type="entry name" value="MITOCHONDRIAL RIBOSOMAL PROTEIN S5"/>
    <property type="match status" value="1"/>
</dbReference>
<dbReference type="Pfam" id="PF00333">
    <property type="entry name" value="Ribosomal_S5"/>
    <property type="match status" value="1"/>
</dbReference>
<dbReference type="Pfam" id="PF03719">
    <property type="entry name" value="Ribosomal_S5_C"/>
    <property type="match status" value="1"/>
</dbReference>
<dbReference type="SUPFAM" id="SSF54768">
    <property type="entry name" value="dsRNA-binding domain-like"/>
    <property type="match status" value="1"/>
</dbReference>
<dbReference type="SUPFAM" id="SSF54211">
    <property type="entry name" value="Ribosomal protein S5 domain 2-like"/>
    <property type="match status" value="1"/>
</dbReference>
<dbReference type="PROSITE" id="PS00585">
    <property type="entry name" value="RIBOSOMAL_S5"/>
    <property type="match status" value="1"/>
</dbReference>
<dbReference type="PROSITE" id="PS50881">
    <property type="entry name" value="S5_DSRBD"/>
    <property type="match status" value="1"/>
</dbReference>